<organism>
    <name type="scientific">Homo sapiens</name>
    <name type="common">Human</name>
    <dbReference type="NCBI Taxonomy" id="9606"/>
    <lineage>
        <taxon>Eukaryota</taxon>
        <taxon>Metazoa</taxon>
        <taxon>Chordata</taxon>
        <taxon>Craniata</taxon>
        <taxon>Vertebrata</taxon>
        <taxon>Euteleostomi</taxon>
        <taxon>Mammalia</taxon>
        <taxon>Eutheria</taxon>
        <taxon>Euarchontoglires</taxon>
        <taxon>Primates</taxon>
        <taxon>Haplorrhini</taxon>
        <taxon>Catarrhini</taxon>
        <taxon>Hominidae</taxon>
        <taxon>Homo</taxon>
    </lineage>
</organism>
<evidence type="ECO:0000250" key="1"/>
<evidence type="ECO:0000255" key="2"/>
<evidence type="ECO:0000256" key="3">
    <source>
        <dbReference type="SAM" id="MobiDB-lite"/>
    </source>
</evidence>
<evidence type="ECO:0000305" key="4"/>
<sequence>MAPRAGQPGLQGLLLVAAALSQPAAPCPFQCYCFGGPKLLLRCASGAELRQPPRDVPPDARNLTIVGANLTVLRAAAFAGGDGDGDQAAGVRLPLLSALRLTHNHIEVVEDGAFDGLPSLAALDLSHNPLRALGGGAFRGLPALRSLQLNHALVRGGPALLAALDAALAPLAELRLLGLAGNALSRLPPAALRLARLEQLDVRLNALAGLDPDELRALERDGGLPGPRLLLADNPLRCGCAARPLLAWLRNATERVPDSRRLRCAAPRALLDRPLLDLDGARLRCADSGADARGEEAEAAGPELEASYVFFGLVLALIGLIFLMVLYLNRRGIQRWMRNLREACRDQMEGYHYRYEQDADPRRAPAPAAPAGSRATSPGSGL</sequence>
<proteinExistence type="evidence at protein level"/>
<dbReference type="EMBL" id="AP001972">
    <property type="status" value="NOT_ANNOTATED_CDS"/>
    <property type="molecule type" value="Genomic_DNA"/>
</dbReference>
<dbReference type="CCDS" id="CCDS60895.1"/>
<dbReference type="RefSeq" id="NP_001182457.1">
    <property type="nucleotide sequence ID" value="NM_001195528.2"/>
</dbReference>
<dbReference type="SMR" id="P0DKB5"/>
<dbReference type="FunCoup" id="P0DKB5">
    <property type="interactions" value="497"/>
</dbReference>
<dbReference type="IntAct" id="P0DKB5">
    <property type="interactions" value="1"/>
</dbReference>
<dbReference type="STRING" id="9606.ENSP00000474988"/>
<dbReference type="GlyCosmos" id="P0DKB5">
    <property type="glycosylation" value="1 site, No reported glycans"/>
</dbReference>
<dbReference type="GlyGen" id="P0DKB5">
    <property type="glycosylation" value="1 site"/>
</dbReference>
<dbReference type="PhosphoSitePlus" id="P0DKB5"/>
<dbReference type="BioMuta" id="TPBGL"/>
<dbReference type="DMDM" id="408407564"/>
<dbReference type="MassIVE" id="P0DKB5"/>
<dbReference type="PaxDb" id="9606-ENSP00000474988"/>
<dbReference type="PeptideAtlas" id="P0DKB5"/>
<dbReference type="DNASU" id="100507050"/>
<dbReference type="Ensembl" id="ENST00000562197.3">
    <property type="protein sequence ID" value="ENSP00000474988.1"/>
    <property type="gene ID" value="ENSG00000261594.4"/>
</dbReference>
<dbReference type="GeneID" id="100507050"/>
<dbReference type="KEGG" id="hsa:100507050"/>
<dbReference type="MANE-Select" id="ENST00000562197.3">
    <property type="protein sequence ID" value="ENSP00000474988.1"/>
    <property type="RefSeq nucleotide sequence ID" value="NM_001195528.2"/>
    <property type="RefSeq protein sequence ID" value="NP_001182457.1"/>
</dbReference>
<dbReference type="UCSC" id="uc021qnk.2">
    <property type="organism name" value="human"/>
</dbReference>
<dbReference type="AGR" id="HGNC:44159"/>
<dbReference type="CTD" id="100507050"/>
<dbReference type="GeneCards" id="TPBGL"/>
<dbReference type="HGNC" id="HGNC:44159">
    <property type="gene designation" value="TPBGL"/>
</dbReference>
<dbReference type="HPA" id="ENSG00000261594">
    <property type="expression patterns" value="Tissue enhanced (brain, testis)"/>
</dbReference>
<dbReference type="neXtProt" id="NX_P0DKB5"/>
<dbReference type="OpenTargets" id="ENSG00000261594"/>
<dbReference type="VEuPathDB" id="HostDB:ENSG00000261594"/>
<dbReference type="eggNOG" id="KOG0619">
    <property type="taxonomic scope" value="Eukaryota"/>
</dbReference>
<dbReference type="GeneTree" id="ENSGT00940000163536"/>
<dbReference type="HOGENOM" id="CLU_064866_0_0_1"/>
<dbReference type="InParanoid" id="P0DKB5"/>
<dbReference type="OMA" id="QCYCFGS"/>
<dbReference type="OrthoDB" id="1574204at2759"/>
<dbReference type="PAN-GO" id="P0DKB5">
    <property type="GO annotations" value="2 GO annotations based on evolutionary models"/>
</dbReference>
<dbReference type="PhylomeDB" id="P0DKB5"/>
<dbReference type="PathwayCommons" id="P0DKB5"/>
<dbReference type="SignaLink" id="P0DKB5"/>
<dbReference type="BioGRID-ORCS" id="100507050">
    <property type="hits" value="23 hits in 1122 CRISPR screens"/>
</dbReference>
<dbReference type="GenomeRNAi" id="100507050"/>
<dbReference type="Pharos" id="P0DKB5">
    <property type="development level" value="Tdark"/>
</dbReference>
<dbReference type="PRO" id="PR:P0DKB5"/>
<dbReference type="Proteomes" id="UP000005640">
    <property type="component" value="Chromosome 11"/>
</dbReference>
<dbReference type="RNAct" id="P0DKB5">
    <property type="molecule type" value="protein"/>
</dbReference>
<dbReference type="Bgee" id="ENSG00000261594">
    <property type="expression patterns" value="Expressed in dorsal root ganglion and 115 other cell types or tissues"/>
</dbReference>
<dbReference type="GO" id="GO:0005886">
    <property type="term" value="C:plasma membrane"/>
    <property type="evidence" value="ECO:0000318"/>
    <property type="project" value="GO_Central"/>
</dbReference>
<dbReference type="GO" id="GO:0090090">
    <property type="term" value="P:negative regulation of canonical Wnt signaling pathway"/>
    <property type="evidence" value="ECO:0000318"/>
    <property type="project" value="GO_Central"/>
</dbReference>
<dbReference type="Gene3D" id="3.80.10.10">
    <property type="entry name" value="Ribonuclease Inhibitor"/>
    <property type="match status" value="2"/>
</dbReference>
<dbReference type="InterPro" id="IPR000483">
    <property type="entry name" value="Cys-rich_flank_reg_C"/>
</dbReference>
<dbReference type="InterPro" id="IPR001611">
    <property type="entry name" value="Leu-rich_rpt"/>
</dbReference>
<dbReference type="InterPro" id="IPR003591">
    <property type="entry name" value="Leu-rich_rpt_typical-subtyp"/>
</dbReference>
<dbReference type="InterPro" id="IPR032675">
    <property type="entry name" value="LRR_dom_sf"/>
</dbReference>
<dbReference type="InterPro" id="IPR052286">
    <property type="entry name" value="Wnt_signaling_inhibitor"/>
</dbReference>
<dbReference type="PANTHER" id="PTHR24364">
    <property type="entry name" value="LP06937P"/>
    <property type="match status" value="1"/>
</dbReference>
<dbReference type="PANTHER" id="PTHR24364:SF16">
    <property type="entry name" value="TROPHOBLAST GLYCOPROTEIN-LIKE"/>
    <property type="match status" value="1"/>
</dbReference>
<dbReference type="Pfam" id="PF13855">
    <property type="entry name" value="LRR_8"/>
    <property type="match status" value="1"/>
</dbReference>
<dbReference type="SMART" id="SM00369">
    <property type="entry name" value="LRR_TYP"/>
    <property type="match status" value="3"/>
</dbReference>
<dbReference type="SMART" id="SM00082">
    <property type="entry name" value="LRRCT"/>
    <property type="match status" value="1"/>
</dbReference>
<dbReference type="SUPFAM" id="SSF52058">
    <property type="entry name" value="L domain-like"/>
    <property type="match status" value="1"/>
</dbReference>
<accession>P0DKB5</accession>
<protein>
    <recommendedName>
        <fullName>Trophoblast glycoprotein-like</fullName>
    </recommendedName>
</protein>
<feature type="signal peptide" evidence="2">
    <location>
        <begin position="1"/>
        <end position="26"/>
    </location>
</feature>
<feature type="chain" id="PRO_0000419456" description="Trophoblast glycoprotein-like">
    <location>
        <begin position="27"/>
        <end position="382"/>
    </location>
</feature>
<feature type="topological domain" description="Extracellular" evidence="2">
    <location>
        <begin position="27"/>
        <end position="307"/>
    </location>
</feature>
<feature type="transmembrane region" description="Helical" evidence="2">
    <location>
        <begin position="308"/>
        <end position="328"/>
    </location>
</feature>
<feature type="topological domain" description="Cytoplasmic" evidence="2">
    <location>
        <begin position="329"/>
        <end position="382"/>
    </location>
</feature>
<feature type="repeat" description="LRR 1">
    <location>
        <begin position="57"/>
        <end position="80"/>
    </location>
</feature>
<feature type="repeat" description="LRR 2">
    <location>
        <begin position="93"/>
        <end position="116"/>
    </location>
</feature>
<feature type="repeat" description="LRR 3">
    <location>
        <begin position="117"/>
        <end position="140"/>
    </location>
</feature>
<feature type="repeat" description="LRR 4">
    <location>
        <begin position="171"/>
        <end position="194"/>
    </location>
</feature>
<feature type="repeat" description="LRR 5">
    <location>
        <begin position="196"/>
        <end position="217"/>
    </location>
</feature>
<feature type="region of interest" description="Disordered" evidence="3">
    <location>
        <begin position="358"/>
        <end position="382"/>
    </location>
</feature>
<feature type="compositionally biased region" description="Low complexity" evidence="3">
    <location>
        <begin position="365"/>
        <end position="382"/>
    </location>
</feature>
<feature type="glycosylation site" description="N-linked (GlcNAc...) asparagine" evidence="2">
    <location>
        <position position="62"/>
    </location>
</feature>
<feature type="disulfide bond" evidence="1">
    <location>
        <begin position="27"/>
        <end position="33"/>
    </location>
</feature>
<feature type="disulfide bond" evidence="1">
    <location>
        <begin position="31"/>
        <end position="43"/>
    </location>
</feature>
<feature type="disulfide bond" evidence="1">
    <location>
        <begin position="238"/>
        <end position="264"/>
    </location>
</feature>
<feature type="disulfide bond" evidence="1">
    <location>
        <begin position="240"/>
        <end position="285"/>
    </location>
</feature>
<comment type="subcellular location">
    <subcellularLocation>
        <location evidence="4">Membrane</location>
        <topology evidence="4">Single-pass type I membrane protein</topology>
    </subcellularLocation>
</comment>
<keyword id="KW-1015">Disulfide bond</keyword>
<keyword id="KW-0325">Glycoprotein</keyword>
<keyword id="KW-0433">Leucine-rich repeat</keyword>
<keyword id="KW-0472">Membrane</keyword>
<keyword id="KW-1267">Proteomics identification</keyword>
<keyword id="KW-1185">Reference proteome</keyword>
<keyword id="KW-0677">Repeat</keyword>
<keyword id="KW-0732">Signal</keyword>
<keyword id="KW-0812">Transmembrane</keyword>
<keyword id="KW-1133">Transmembrane helix</keyword>
<gene>
    <name type="primary">TPBGL</name>
</gene>
<name>TPBGL_HUMAN</name>
<reference key="1">
    <citation type="journal article" date="2006" name="Nature">
        <title>Human chromosome 11 DNA sequence and analysis including novel gene identification.</title>
        <authorList>
            <person name="Taylor T.D."/>
            <person name="Noguchi H."/>
            <person name="Totoki Y."/>
            <person name="Toyoda A."/>
            <person name="Kuroki Y."/>
            <person name="Dewar K."/>
            <person name="Lloyd C."/>
            <person name="Itoh T."/>
            <person name="Takeda T."/>
            <person name="Kim D.-W."/>
            <person name="She X."/>
            <person name="Barlow K.F."/>
            <person name="Bloom T."/>
            <person name="Bruford E."/>
            <person name="Chang J.L."/>
            <person name="Cuomo C.A."/>
            <person name="Eichler E."/>
            <person name="FitzGerald M.G."/>
            <person name="Jaffe D.B."/>
            <person name="LaButti K."/>
            <person name="Nicol R."/>
            <person name="Park H.-S."/>
            <person name="Seaman C."/>
            <person name="Sougnez C."/>
            <person name="Yang X."/>
            <person name="Zimmer A.R."/>
            <person name="Zody M.C."/>
            <person name="Birren B.W."/>
            <person name="Nusbaum C."/>
            <person name="Fujiyama A."/>
            <person name="Hattori M."/>
            <person name="Rogers J."/>
            <person name="Lander E.S."/>
            <person name="Sakaki Y."/>
        </authorList>
    </citation>
    <scope>NUCLEOTIDE SEQUENCE [LARGE SCALE GENOMIC DNA]</scope>
</reference>